<name>RS19_LEGPA</name>
<protein>
    <recommendedName>
        <fullName evidence="1">Small ribosomal subunit protein uS19</fullName>
    </recommendedName>
    <alternativeName>
        <fullName evidence="2">30S ribosomal protein S19</fullName>
    </alternativeName>
</protein>
<organism>
    <name type="scientific">Legionella pneumophila (strain Paris)</name>
    <dbReference type="NCBI Taxonomy" id="297246"/>
    <lineage>
        <taxon>Bacteria</taxon>
        <taxon>Pseudomonadati</taxon>
        <taxon>Pseudomonadota</taxon>
        <taxon>Gammaproteobacteria</taxon>
        <taxon>Legionellales</taxon>
        <taxon>Legionellaceae</taxon>
        <taxon>Legionella</taxon>
    </lineage>
</organism>
<sequence length="92" mass="10319">MARSIRKGPFIDHHLISKVEAAIESKSKKPIKTWSRRSTIVPEMIDLTIAVHNGKDHVPVFITDNMVGHKLGEFAMTRTFKGHSGDRKAKGK</sequence>
<proteinExistence type="inferred from homology"/>
<reference key="1">
    <citation type="journal article" date="2004" name="Nat. Genet.">
        <title>Evidence in the Legionella pneumophila genome for exploitation of host cell functions and high genome plasticity.</title>
        <authorList>
            <person name="Cazalet C."/>
            <person name="Rusniok C."/>
            <person name="Brueggemann H."/>
            <person name="Zidane N."/>
            <person name="Magnier A."/>
            <person name="Ma L."/>
            <person name="Tichit M."/>
            <person name="Jarraud S."/>
            <person name="Bouchier C."/>
            <person name="Vandenesch F."/>
            <person name="Kunst F."/>
            <person name="Etienne J."/>
            <person name="Glaser P."/>
            <person name="Buchrieser C."/>
        </authorList>
    </citation>
    <scope>NUCLEOTIDE SEQUENCE [LARGE SCALE GENOMIC DNA]</scope>
    <source>
        <strain>Paris</strain>
    </source>
</reference>
<keyword id="KW-0687">Ribonucleoprotein</keyword>
<keyword id="KW-0689">Ribosomal protein</keyword>
<keyword id="KW-0694">RNA-binding</keyword>
<keyword id="KW-0699">rRNA-binding</keyword>
<dbReference type="EMBL" id="CR628336">
    <property type="protein sequence ID" value="CAH11546.1"/>
    <property type="molecule type" value="Genomic_DNA"/>
</dbReference>
<dbReference type="RefSeq" id="WP_010946728.1">
    <property type="nucleotide sequence ID" value="NC_006368.1"/>
</dbReference>
<dbReference type="SMR" id="Q5X855"/>
<dbReference type="GeneID" id="57034336"/>
<dbReference type="KEGG" id="lpp:lpp0398"/>
<dbReference type="LegioList" id="lpp0398"/>
<dbReference type="HOGENOM" id="CLU_144911_0_1_6"/>
<dbReference type="GO" id="GO:0005737">
    <property type="term" value="C:cytoplasm"/>
    <property type="evidence" value="ECO:0007669"/>
    <property type="project" value="UniProtKB-ARBA"/>
</dbReference>
<dbReference type="GO" id="GO:0015935">
    <property type="term" value="C:small ribosomal subunit"/>
    <property type="evidence" value="ECO:0007669"/>
    <property type="project" value="InterPro"/>
</dbReference>
<dbReference type="GO" id="GO:0019843">
    <property type="term" value="F:rRNA binding"/>
    <property type="evidence" value="ECO:0007669"/>
    <property type="project" value="UniProtKB-UniRule"/>
</dbReference>
<dbReference type="GO" id="GO:0003735">
    <property type="term" value="F:structural constituent of ribosome"/>
    <property type="evidence" value="ECO:0007669"/>
    <property type="project" value="InterPro"/>
</dbReference>
<dbReference type="GO" id="GO:0000028">
    <property type="term" value="P:ribosomal small subunit assembly"/>
    <property type="evidence" value="ECO:0007669"/>
    <property type="project" value="TreeGrafter"/>
</dbReference>
<dbReference type="GO" id="GO:0006412">
    <property type="term" value="P:translation"/>
    <property type="evidence" value="ECO:0007669"/>
    <property type="project" value="UniProtKB-UniRule"/>
</dbReference>
<dbReference type="FunFam" id="3.30.860.10:FF:000001">
    <property type="entry name" value="30S ribosomal protein S19"/>
    <property type="match status" value="1"/>
</dbReference>
<dbReference type="Gene3D" id="3.30.860.10">
    <property type="entry name" value="30s Ribosomal Protein S19, Chain A"/>
    <property type="match status" value="1"/>
</dbReference>
<dbReference type="HAMAP" id="MF_00531">
    <property type="entry name" value="Ribosomal_uS19"/>
    <property type="match status" value="1"/>
</dbReference>
<dbReference type="InterPro" id="IPR002222">
    <property type="entry name" value="Ribosomal_uS19"/>
</dbReference>
<dbReference type="InterPro" id="IPR005732">
    <property type="entry name" value="Ribosomal_uS19_bac-type"/>
</dbReference>
<dbReference type="InterPro" id="IPR020934">
    <property type="entry name" value="Ribosomal_uS19_CS"/>
</dbReference>
<dbReference type="InterPro" id="IPR023575">
    <property type="entry name" value="Ribosomal_uS19_SF"/>
</dbReference>
<dbReference type="NCBIfam" id="TIGR01050">
    <property type="entry name" value="rpsS_bact"/>
    <property type="match status" value="1"/>
</dbReference>
<dbReference type="PANTHER" id="PTHR11880">
    <property type="entry name" value="RIBOSOMAL PROTEIN S19P FAMILY MEMBER"/>
    <property type="match status" value="1"/>
</dbReference>
<dbReference type="PANTHER" id="PTHR11880:SF8">
    <property type="entry name" value="SMALL RIBOSOMAL SUBUNIT PROTEIN US19M"/>
    <property type="match status" value="1"/>
</dbReference>
<dbReference type="Pfam" id="PF00203">
    <property type="entry name" value="Ribosomal_S19"/>
    <property type="match status" value="1"/>
</dbReference>
<dbReference type="PIRSF" id="PIRSF002144">
    <property type="entry name" value="Ribosomal_S19"/>
    <property type="match status" value="1"/>
</dbReference>
<dbReference type="PRINTS" id="PR00975">
    <property type="entry name" value="RIBOSOMALS19"/>
</dbReference>
<dbReference type="SUPFAM" id="SSF54570">
    <property type="entry name" value="Ribosomal protein S19"/>
    <property type="match status" value="1"/>
</dbReference>
<dbReference type="PROSITE" id="PS00323">
    <property type="entry name" value="RIBOSOMAL_S19"/>
    <property type="match status" value="1"/>
</dbReference>
<gene>
    <name evidence="1" type="primary">rpsS</name>
    <name type="ordered locus">lpp0398</name>
</gene>
<accession>Q5X855</accession>
<feature type="chain" id="PRO_0000129839" description="Small ribosomal subunit protein uS19">
    <location>
        <begin position="1"/>
        <end position="92"/>
    </location>
</feature>
<evidence type="ECO:0000255" key="1">
    <source>
        <dbReference type="HAMAP-Rule" id="MF_00531"/>
    </source>
</evidence>
<evidence type="ECO:0000305" key="2"/>
<comment type="function">
    <text evidence="1">Protein S19 forms a complex with S13 that binds strongly to the 16S ribosomal RNA.</text>
</comment>
<comment type="similarity">
    <text evidence="1">Belongs to the universal ribosomal protein uS19 family.</text>
</comment>